<organism>
    <name type="scientific">Pyrococcus furiosus (strain ATCC 43587 / DSM 3638 / JCM 8422 / Vc1)</name>
    <dbReference type="NCBI Taxonomy" id="186497"/>
    <lineage>
        <taxon>Archaea</taxon>
        <taxon>Methanobacteriati</taxon>
        <taxon>Methanobacteriota</taxon>
        <taxon>Thermococci</taxon>
        <taxon>Thermococcales</taxon>
        <taxon>Thermococcaceae</taxon>
        <taxon>Pyrococcus</taxon>
    </lineage>
</organism>
<name>RS14Z_PYRFU</name>
<reference key="1">
    <citation type="journal article" date="1999" name="Genetics">
        <title>Divergence of the hyperthermophilic archaea Pyrococcus furiosus and P. horikoshii inferred from complete genomic sequences.</title>
        <authorList>
            <person name="Maeder D.L."/>
            <person name="Weiss R.B."/>
            <person name="Dunn D.M."/>
            <person name="Cherry J.L."/>
            <person name="Gonzalez J.M."/>
            <person name="DiRuggiero J."/>
            <person name="Robb F.T."/>
        </authorList>
    </citation>
    <scope>NUCLEOTIDE SEQUENCE [LARGE SCALE GENOMIC DNA]</scope>
    <source>
        <strain>ATCC 43587 / DSM 3638 / JCM 8422 / Vc1</strain>
    </source>
</reference>
<reference evidence="3" key="2">
    <citation type="journal article" date="2013" name="Nucleic Acids Res.">
        <title>Promiscuous behaviour of archaeal ribosomal proteins: implications for eukaryotic ribosome evolution.</title>
        <authorList>
            <person name="Armache J.P."/>
            <person name="Anger A.M."/>
            <person name="Marquez V."/>
            <person name="Franckenberg S."/>
            <person name="Frohlich T."/>
            <person name="Villa E."/>
            <person name="Berninghausen O."/>
            <person name="Thomm M."/>
            <person name="Arnold G.J."/>
            <person name="Beckmann R."/>
            <person name="Wilson D.N."/>
        </authorList>
    </citation>
    <scope>STRUCTURE BY ELECTRON MICROSCOPY (6.60 ANGSTROMS) IN THE 70S RIBOSOME</scope>
    <scope>SUBUNIT</scope>
</reference>
<sequence length="56" mass="6617">MAKADYNKRKPRKFGKGARRCIRCGQYGPIIRIQGLMLCRHCFREVAPKLGFRKYE</sequence>
<keyword id="KW-0002">3D-structure</keyword>
<keyword id="KW-0479">Metal-binding</keyword>
<keyword id="KW-1185">Reference proteome</keyword>
<keyword id="KW-0687">Ribonucleoprotein</keyword>
<keyword id="KW-0689">Ribosomal protein</keyword>
<keyword id="KW-0694">RNA-binding</keyword>
<keyword id="KW-0699">rRNA-binding</keyword>
<keyword id="KW-0862">Zinc</keyword>
<feature type="chain" id="PRO_0000269171" description="Small ribosomal subunit protein uS14">
    <location>
        <begin position="1"/>
        <end position="56"/>
    </location>
</feature>
<feature type="binding site" evidence="1">
    <location>
        <position position="21"/>
    </location>
    <ligand>
        <name>Zn(2+)</name>
        <dbReference type="ChEBI" id="CHEBI:29105"/>
    </ligand>
</feature>
<feature type="binding site" evidence="1">
    <location>
        <position position="24"/>
    </location>
    <ligand>
        <name>Zn(2+)</name>
        <dbReference type="ChEBI" id="CHEBI:29105"/>
    </ligand>
</feature>
<feature type="binding site" evidence="1">
    <location>
        <position position="39"/>
    </location>
    <ligand>
        <name>Zn(2+)</name>
        <dbReference type="ChEBI" id="CHEBI:29105"/>
    </ligand>
</feature>
<feature type="binding site" evidence="1">
    <location>
        <position position="42"/>
    </location>
    <ligand>
        <name>Zn(2+)</name>
        <dbReference type="ChEBI" id="CHEBI:29105"/>
    </ligand>
</feature>
<accession>Q8U013</accession>
<gene>
    <name evidence="1" type="primary">rps14</name>
    <name type="ordered locus">PF1810</name>
</gene>
<dbReference type="EMBL" id="AE009950">
    <property type="protein sequence ID" value="AAL81934.1"/>
    <property type="molecule type" value="Genomic_DNA"/>
</dbReference>
<dbReference type="RefSeq" id="WP_011012951.1">
    <property type="nucleotide sequence ID" value="NZ_CP023154.1"/>
</dbReference>
<dbReference type="PDB" id="4V4N">
    <property type="method" value="EM"/>
    <property type="resolution" value="9.00 A"/>
    <property type="chains" value="P=1-56"/>
</dbReference>
<dbReference type="PDB" id="4V6U">
    <property type="method" value="EM"/>
    <property type="resolution" value="6.60 A"/>
    <property type="chains" value="AP=1-56"/>
</dbReference>
<dbReference type="PDB" id="5JB3">
    <property type="method" value="EM"/>
    <property type="resolution" value="5.34 A"/>
    <property type="chains" value="P=1-56"/>
</dbReference>
<dbReference type="PDB" id="5JBH">
    <property type="method" value="EM"/>
    <property type="resolution" value="5.34 A"/>
    <property type="chains" value="P=1-56"/>
</dbReference>
<dbReference type="PDBsum" id="4V4N"/>
<dbReference type="PDBsum" id="4V6U"/>
<dbReference type="PDBsum" id="5JB3"/>
<dbReference type="PDBsum" id="5JBH"/>
<dbReference type="EMDB" id="EMD-50611"/>
<dbReference type="EMDB" id="EMD-50612"/>
<dbReference type="EMDB" id="EMD-50613"/>
<dbReference type="EMDB" id="EMD-8148"/>
<dbReference type="EMDB" id="EMD-8149"/>
<dbReference type="SMR" id="Q8U013"/>
<dbReference type="STRING" id="186497.PF1810"/>
<dbReference type="PaxDb" id="186497-PF1810"/>
<dbReference type="KEGG" id="pfu:PF1810"/>
<dbReference type="PATRIC" id="fig|186497.12.peg.1881"/>
<dbReference type="eggNOG" id="arCOG00782">
    <property type="taxonomic scope" value="Archaea"/>
</dbReference>
<dbReference type="HOGENOM" id="CLU_177289_2_2_2"/>
<dbReference type="OrthoDB" id="5615at2157"/>
<dbReference type="PhylomeDB" id="Q8U013"/>
<dbReference type="Proteomes" id="UP000001013">
    <property type="component" value="Chromosome"/>
</dbReference>
<dbReference type="GO" id="GO:0022627">
    <property type="term" value="C:cytosolic small ribosomal subunit"/>
    <property type="evidence" value="ECO:0007669"/>
    <property type="project" value="TreeGrafter"/>
</dbReference>
<dbReference type="GO" id="GO:0019843">
    <property type="term" value="F:rRNA binding"/>
    <property type="evidence" value="ECO:0007669"/>
    <property type="project" value="UniProtKB-UniRule"/>
</dbReference>
<dbReference type="GO" id="GO:0003735">
    <property type="term" value="F:structural constituent of ribosome"/>
    <property type="evidence" value="ECO:0007669"/>
    <property type="project" value="InterPro"/>
</dbReference>
<dbReference type="GO" id="GO:0008270">
    <property type="term" value="F:zinc ion binding"/>
    <property type="evidence" value="ECO:0007669"/>
    <property type="project" value="UniProtKB-UniRule"/>
</dbReference>
<dbReference type="GO" id="GO:0002181">
    <property type="term" value="P:cytoplasmic translation"/>
    <property type="evidence" value="ECO:0007669"/>
    <property type="project" value="TreeGrafter"/>
</dbReference>
<dbReference type="FunFam" id="4.10.830.10:FF:000002">
    <property type="entry name" value="40S ribosomal protein S29"/>
    <property type="match status" value="1"/>
</dbReference>
<dbReference type="Gene3D" id="4.10.830.10">
    <property type="entry name" value="30s Ribosomal Protein S14, Chain N"/>
    <property type="match status" value="1"/>
</dbReference>
<dbReference type="HAMAP" id="MF_01364_A">
    <property type="entry name" value="Ribosomal_uS14_2_A"/>
    <property type="match status" value="1"/>
</dbReference>
<dbReference type="InterPro" id="IPR001209">
    <property type="entry name" value="Ribosomal_uS14"/>
</dbReference>
<dbReference type="InterPro" id="IPR023676">
    <property type="entry name" value="Ribosomal_uS14_arc"/>
</dbReference>
<dbReference type="InterPro" id="IPR018271">
    <property type="entry name" value="Ribosomal_uS14_CS"/>
</dbReference>
<dbReference type="InterPro" id="IPR039744">
    <property type="entry name" value="RIbosomal_uS14_euk_arc"/>
</dbReference>
<dbReference type="InterPro" id="IPR043140">
    <property type="entry name" value="Ribosomal_uS14_sf"/>
</dbReference>
<dbReference type="NCBIfam" id="NF004424">
    <property type="entry name" value="PRK05766.1"/>
    <property type="match status" value="1"/>
</dbReference>
<dbReference type="PANTHER" id="PTHR12010">
    <property type="entry name" value="40S RIBOSOMAL PROTEIN S29"/>
    <property type="match status" value="1"/>
</dbReference>
<dbReference type="PANTHER" id="PTHR12010:SF2">
    <property type="entry name" value="40S RIBOSOMAL PROTEIN S29"/>
    <property type="match status" value="1"/>
</dbReference>
<dbReference type="Pfam" id="PF00253">
    <property type="entry name" value="Ribosomal_S14"/>
    <property type="match status" value="1"/>
</dbReference>
<dbReference type="PROSITE" id="PS00527">
    <property type="entry name" value="RIBOSOMAL_S14"/>
    <property type="match status" value="1"/>
</dbReference>
<protein>
    <recommendedName>
        <fullName evidence="1">Small ribosomal subunit protein uS14</fullName>
    </recommendedName>
    <alternativeName>
        <fullName>30S ribosomal protein S14 type Z</fullName>
    </alternativeName>
</protein>
<proteinExistence type="evidence at protein level"/>
<evidence type="ECO:0000255" key="1">
    <source>
        <dbReference type="HAMAP-Rule" id="MF_01364"/>
    </source>
</evidence>
<evidence type="ECO:0000269" key="2">
    <source>
    </source>
</evidence>
<evidence type="ECO:0007744" key="3">
    <source>
        <dbReference type="PDB" id="4V6U"/>
    </source>
</evidence>
<comment type="function">
    <text evidence="1">Binds 16S rRNA, required for the assembly of 30S particles.</text>
</comment>
<comment type="cofactor">
    <cofactor evidence="1">
        <name>Zn(2+)</name>
        <dbReference type="ChEBI" id="CHEBI:29105"/>
    </cofactor>
    <text evidence="1">Binds 1 zinc ion per subunit.</text>
</comment>
<comment type="subunit">
    <text evidence="1 2">Part of the 30S ribosomal subunit.</text>
</comment>
<comment type="similarity">
    <text evidence="1">Belongs to the universal ribosomal protein uS14 family. Zinc-binding uS14 subfamily.</text>
</comment>